<gene>
    <name evidence="1" type="primary">rpsQ</name>
    <name type="ordered locus">Msil_0571</name>
</gene>
<evidence type="ECO:0000255" key="1">
    <source>
        <dbReference type="HAMAP-Rule" id="MF_01345"/>
    </source>
</evidence>
<evidence type="ECO:0000305" key="2"/>
<name>RS17_METSB</name>
<accession>B8ELF4</accession>
<feature type="chain" id="PRO_1000166489" description="Small ribosomal subunit protein uS17">
    <location>
        <begin position="1"/>
        <end position="81"/>
    </location>
</feature>
<proteinExistence type="inferred from homology"/>
<protein>
    <recommendedName>
        <fullName evidence="1">Small ribosomal subunit protein uS17</fullName>
    </recommendedName>
    <alternativeName>
        <fullName evidence="2">30S ribosomal protein S17</fullName>
    </alternativeName>
</protein>
<comment type="function">
    <text evidence="1">One of the primary rRNA binding proteins, it binds specifically to the 5'-end of 16S ribosomal RNA.</text>
</comment>
<comment type="subunit">
    <text evidence="1">Part of the 30S ribosomal subunit.</text>
</comment>
<comment type="similarity">
    <text evidence="1">Belongs to the universal ribosomal protein uS17 family.</text>
</comment>
<reference key="1">
    <citation type="journal article" date="2010" name="J. Bacteriol.">
        <title>Complete genome sequence of the aerobic facultative methanotroph Methylocella silvestris BL2.</title>
        <authorList>
            <person name="Chen Y."/>
            <person name="Crombie A."/>
            <person name="Rahman M.T."/>
            <person name="Dedysh S.N."/>
            <person name="Liesack W."/>
            <person name="Stott M.B."/>
            <person name="Alam M."/>
            <person name="Theisen A.R."/>
            <person name="Murrell J.C."/>
            <person name="Dunfield P.F."/>
        </authorList>
    </citation>
    <scope>NUCLEOTIDE SEQUENCE [LARGE SCALE GENOMIC DNA]</scope>
    <source>
        <strain>DSM 15510 / CIP 108128 / LMG 27833 / NCIMB 13906 / BL2</strain>
    </source>
</reference>
<organism>
    <name type="scientific">Methylocella silvestris (strain DSM 15510 / CIP 108128 / LMG 27833 / NCIMB 13906 / BL2)</name>
    <dbReference type="NCBI Taxonomy" id="395965"/>
    <lineage>
        <taxon>Bacteria</taxon>
        <taxon>Pseudomonadati</taxon>
        <taxon>Pseudomonadota</taxon>
        <taxon>Alphaproteobacteria</taxon>
        <taxon>Hyphomicrobiales</taxon>
        <taxon>Beijerinckiaceae</taxon>
        <taxon>Methylocella</taxon>
    </lineage>
</organism>
<sequence>MPKRILQGVVVSDKQEKTIVVKVERRFTHPLLKKTVRRSKNYHAHDETKAFKIGDTVSIEETKPMSKLKRWIVLPAAQAQG</sequence>
<dbReference type="EMBL" id="CP001280">
    <property type="protein sequence ID" value="ACK49543.1"/>
    <property type="molecule type" value="Genomic_DNA"/>
</dbReference>
<dbReference type="RefSeq" id="WP_012589613.1">
    <property type="nucleotide sequence ID" value="NC_011666.1"/>
</dbReference>
<dbReference type="SMR" id="B8ELF4"/>
<dbReference type="STRING" id="395965.Msil_0571"/>
<dbReference type="KEGG" id="msl:Msil_0571"/>
<dbReference type="eggNOG" id="COG0186">
    <property type="taxonomic scope" value="Bacteria"/>
</dbReference>
<dbReference type="HOGENOM" id="CLU_073626_1_1_5"/>
<dbReference type="OrthoDB" id="9811714at2"/>
<dbReference type="Proteomes" id="UP000002257">
    <property type="component" value="Chromosome"/>
</dbReference>
<dbReference type="GO" id="GO:0022627">
    <property type="term" value="C:cytosolic small ribosomal subunit"/>
    <property type="evidence" value="ECO:0007669"/>
    <property type="project" value="TreeGrafter"/>
</dbReference>
<dbReference type="GO" id="GO:0019843">
    <property type="term" value="F:rRNA binding"/>
    <property type="evidence" value="ECO:0007669"/>
    <property type="project" value="UniProtKB-UniRule"/>
</dbReference>
<dbReference type="GO" id="GO:0003735">
    <property type="term" value="F:structural constituent of ribosome"/>
    <property type="evidence" value="ECO:0007669"/>
    <property type="project" value="InterPro"/>
</dbReference>
<dbReference type="GO" id="GO:0006412">
    <property type="term" value="P:translation"/>
    <property type="evidence" value="ECO:0007669"/>
    <property type="project" value="UniProtKB-UniRule"/>
</dbReference>
<dbReference type="CDD" id="cd00364">
    <property type="entry name" value="Ribosomal_uS17"/>
    <property type="match status" value="1"/>
</dbReference>
<dbReference type="Gene3D" id="2.40.50.140">
    <property type="entry name" value="Nucleic acid-binding proteins"/>
    <property type="match status" value="1"/>
</dbReference>
<dbReference type="HAMAP" id="MF_01345_B">
    <property type="entry name" value="Ribosomal_uS17_B"/>
    <property type="match status" value="1"/>
</dbReference>
<dbReference type="InterPro" id="IPR012340">
    <property type="entry name" value="NA-bd_OB-fold"/>
</dbReference>
<dbReference type="InterPro" id="IPR000266">
    <property type="entry name" value="Ribosomal_uS17"/>
</dbReference>
<dbReference type="InterPro" id="IPR019984">
    <property type="entry name" value="Ribosomal_uS17_bact/chlr"/>
</dbReference>
<dbReference type="NCBIfam" id="NF004123">
    <property type="entry name" value="PRK05610.1"/>
    <property type="match status" value="1"/>
</dbReference>
<dbReference type="NCBIfam" id="TIGR03635">
    <property type="entry name" value="uS17_bact"/>
    <property type="match status" value="1"/>
</dbReference>
<dbReference type="PANTHER" id="PTHR10744">
    <property type="entry name" value="40S RIBOSOMAL PROTEIN S11 FAMILY MEMBER"/>
    <property type="match status" value="1"/>
</dbReference>
<dbReference type="PANTHER" id="PTHR10744:SF1">
    <property type="entry name" value="SMALL RIBOSOMAL SUBUNIT PROTEIN US17M"/>
    <property type="match status" value="1"/>
</dbReference>
<dbReference type="Pfam" id="PF00366">
    <property type="entry name" value="Ribosomal_S17"/>
    <property type="match status" value="1"/>
</dbReference>
<dbReference type="PRINTS" id="PR00973">
    <property type="entry name" value="RIBOSOMALS17"/>
</dbReference>
<dbReference type="SUPFAM" id="SSF50249">
    <property type="entry name" value="Nucleic acid-binding proteins"/>
    <property type="match status" value="1"/>
</dbReference>
<keyword id="KW-1185">Reference proteome</keyword>
<keyword id="KW-0687">Ribonucleoprotein</keyword>
<keyword id="KW-0689">Ribosomal protein</keyword>
<keyword id="KW-0694">RNA-binding</keyword>
<keyword id="KW-0699">rRNA-binding</keyword>